<organism>
    <name type="scientific">Acinetobacter baumannii (strain AB0057)</name>
    <dbReference type="NCBI Taxonomy" id="480119"/>
    <lineage>
        <taxon>Bacteria</taxon>
        <taxon>Pseudomonadati</taxon>
        <taxon>Pseudomonadota</taxon>
        <taxon>Gammaproteobacteria</taxon>
        <taxon>Moraxellales</taxon>
        <taxon>Moraxellaceae</taxon>
        <taxon>Acinetobacter</taxon>
        <taxon>Acinetobacter calcoaceticus/baumannii complex</taxon>
    </lineage>
</organism>
<gene>
    <name evidence="1" type="primary">rplB</name>
    <name type="ordered locus">AB57_3527</name>
</gene>
<keyword id="KW-0002">3D-structure</keyword>
<keyword id="KW-0687">Ribonucleoprotein</keyword>
<keyword id="KW-0689">Ribosomal protein</keyword>
<keyword id="KW-0694">RNA-binding</keyword>
<keyword id="KW-0699">rRNA-binding</keyword>
<proteinExistence type="evidence at protein level"/>
<reference key="1">
    <citation type="journal article" date="2008" name="J. Bacteriol.">
        <title>Comparative genome sequence analysis of multidrug-resistant Acinetobacter baumannii.</title>
        <authorList>
            <person name="Adams M.D."/>
            <person name="Goglin K."/>
            <person name="Molyneaux N."/>
            <person name="Hujer K.M."/>
            <person name="Lavender H."/>
            <person name="Jamison J.J."/>
            <person name="MacDonald I.J."/>
            <person name="Martin K.M."/>
            <person name="Russo T."/>
            <person name="Campagnari A.A."/>
            <person name="Hujer A.M."/>
            <person name="Bonomo R.A."/>
            <person name="Gill S.R."/>
        </authorList>
    </citation>
    <scope>NUCLEOTIDE SEQUENCE [LARGE SCALE GENOMIC DNA]</scope>
    <source>
        <strain>AB0057</strain>
    </source>
</reference>
<sequence length="274" mass="30280">MPIQKCKPTSPGRRFVEKVVHDHLHKGAPYAPLVEAKKRTGGRNNNGHITTRHVGGGHKQHYRIVDFKRNKDGVPAVVERIEYDPNRTAHIALLKYADGERRYIIAPKGLRAGDKVQSGNDAPIRPGNCLPLRNMPIGSTLHNVELKIGKGAQLARSAGASVQLLGRDGSYAIIRLRSGEMRKVHVECRAVIGEVSNQENNLRSLGKAGAARWRGVRPTVRGMAMNPIDHPHGGGEGRNKGIQPVSPWGQKAKGYKTRTNKRTTKMIIRDRRVK</sequence>
<accession>B7IA36</accession>
<evidence type="ECO:0000255" key="1">
    <source>
        <dbReference type="HAMAP-Rule" id="MF_01320"/>
    </source>
</evidence>
<evidence type="ECO:0000256" key="2">
    <source>
        <dbReference type="SAM" id="MobiDB-lite"/>
    </source>
</evidence>
<evidence type="ECO:0000305" key="3"/>
<evidence type="ECO:0007829" key="4">
    <source>
        <dbReference type="PDB" id="7M4V"/>
    </source>
</evidence>
<name>RL2_ACIB5</name>
<dbReference type="EMBL" id="CP001182">
    <property type="protein sequence ID" value="ACJ42894.1"/>
    <property type="molecule type" value="Genomic_DNA"/>
</dbReference>
<dbReference type="RefSeq" id="WP_001122317.1">
    <property type="nucleotide sequence ID" value="NC_011586.2"/>
</dbReference>
<dbReference type="PDB" id="6V39">
    <property type="method" value="EM"/>
    <property type="resolution" value="3.04 A"/>
    <property type="chains" value="C=1-274"/>
</dbReference>
<dbReference type="PDB" id="6V3A">
    <property type="method" value="EM"/>
    <property type="resolution" value="2.82 A"/>
    <property type="chains" value="C=1-274"/>
</dbReference>
<dbReference type="PDB" id="6V3B">
    <property type="method" value="EM"/>
    <property type="resolution" value="2.91 A"/>
    <property type="chains" value="C=1-274"/>
</dbReference>
<dbReference type="PDB" id="6V3D">
    <property type="method" value="EM"/>
    <property type="resolution" value="2.95 A"/>
    <property type="chains" value="C=1-274"/>
</dbReference>
<dbReference type="PDB" id="7M4V">
    <property type="method" value="EM"/>
    <property type="resolution" value="2.54 A"/>
    <property type="chains" value="C=1-274"/>
</dbReference>
<dbReference type="PDB" id="7M4W">
    <property type="method" value="EM"/>
    <property type="resolution" value="2.55 A"/>
    <property type="chains" value="C=1-274"/>
</dbReference>
<dbReference type="PDB" id="7M4X">
    <property type="method" value="EM"/>
    <property type="resolution" value="2.66 A"/>
    <property type="chains" value="C=1-274"/>
</dbReference>
<dbReference type="PDB" id="7M4Y">
    <property type="method" value="EM"/>
    <property type="resolution" value="2.50 A"/>
    <property type="chains" value="C=1-274"/>
</dbReference>
<dbReference type="PDB" id="7M4Z">
    <property type="method" value="EM"/>
    <property type="resolution" value="2.92 A"/>
    <property type="chains" value="C=1-274"/>
</dbReference>
<dbReference type="PDB" id="7RYF">
    <property type="method" value="EM"/>
    <property type="resolution" value="2.65 A"/>
    <property type="chains" value="C=1-274"/>
</dbReference>
<dbReference type="PDB" id="7RYG">
    <property type="method" value="EM"/>
    <property type="resolution" value="2.38 A"/>
    <property type="chains" value="C=1-274"/>
</dbReference>
<dbReference type="PDB" id="7RYH">
    <property type="method" value="EM"/>
    <property type="resolution" value="2.43 A"/>
    <property type="chains" value="C=1-274"/>
</dbReference>
<dbReference type="PDB" id="7UVV">
    <property type="method" value="EM"/>
    <property type="resolution" value="2.50 A"/>
    <property type="chains" value="C=1-274"/>
</dbReference>
<dbReference type="PDB" id="7UVW">
    <property type="method" value="EM"/>
    <property type="resolution" value="2.37 A"/>
    <property type="chains" value="C=1-274"/>
</dbReference>
<dbReference type="PDB" id="7UVX">
    <property type="method" value="EM"/>
    <property type="resolution" value="2.35 A"/>
    <property type="chains" value="C=1-274"/>
</dbReference>
<dbReference type="PDB" id="7UVY">
    <property type="method" value="EM"/>
    <property type="resolution" value="2.39 A"/>
    <property type="chains" value="C=1-274"/>
</dbReference>
<dbReference type="PDB" id="7UVZ">
    <property type="method" value="EM"/>
    <property type="resolution" value="2.21 A"/>
    <property type="chains" value="C=1-274"/>
</dbReference>
<dbReference type="PDB" id="7UW1">
    <property type="method" value="EM"/>
    <property type="resolution" value="2.21 A"/>
    <property type="chains" value="C=1-274"/>
</dbReference>
<dbReference type="PDBsum" id="6V39"/>
<dbReference type="PDBsum" id="6V3A"/>
<dbReference type="PDBsum" id="6V3B"/>
<dbReference type="PDBsum" id="6V3D"/>
<dbReference type="PDBsum" id="7M4V"/>
<dbReference type="PDBsum" id="7M4W"/>
<dbReference type="PDBsum" id="7M4X"/>
<dbReference type="PDBsum" id="7M4Y"/>
<dbReference type="PDBsum" id="7M4Z"/>
<dbReference type="PDBsum" id="7RYF"/>
<dbReference type="PDBsum" id="7RYG"/>
<dbReference type="PDBsum" id="7RYH"/>
<dbReference type="PDBsum" id="7UVV"/>
<dbReference type="PDBsum" id="7UVW"/>
<dbReference type="PDBsum" id="7UVX"/>
<dbReference type="PDBsum" id="7UVY"/>
<dbReference type="PDBsum" id="7UVZ"/>
<dbReference type="PDBsum" id="7UW1"/>
<dbReference type="EMDB" id="EMD-21030"/>
<dbReference type="EMDB" id="EMD-21031"/>
<dbReference type="EMDB" id="EMD-21032"/>
<dbReference type="EMDB" id="EMD-21033"/>
<dbReference type="EMDB" id="EMD-23667"/>
<dbReference type="EMDB" id="EMD-23668"/>
<dbReference type="EMDB" id="EMD-23669"/>
<dbReference type="EMDB" id="EMD-23670"/>
<dbReference type="EMDB" id="EMD-23671"/>
<dbReference type="EMDB" id="EMD-24738"/>
<dbReference type="EMDB" id="EMD-24739"/>
<dbReference type="EMDB" id="EMD-24740"/>
<dbReference type="EMDB" id="EMD-26817"/>
<dbReference type="EMDB" id="EMD-26818"/>
<dbReference type="EMDB" id="EMD-26819"/>
<dbReference type="EMDB" id="EMD-26820"/>
<dbReference type="EMDB" id="EMD-26821"/>
<dbReference type="EMDB" id="EMD-26822"/>
<dbReference type="SMR" id="B7IA36"/>
<dbReference type="IntAct" id="B7IA36">
    <property type="interactions" value="2"/>
</dbReference>
<dbReference type="KEGG" id="abn:AB57_06560"/>
<dbReference type="HOGENOM" id="CLU_036235_2_1_6"/>
<dbReference type="Proteomes" id="UP000007094">
    <property type="component" value="Chromosome"/>
</dbReference>
<dbReference type="GO" id="GO:0015934">
    <property type="term" value="C:large ribosomal subunit"/>
    <property type="evidence" value="ECO:0007669"/>
    <property type="project" value="InterPro"/>
</dbReference>
<dbReference type="GO" id="GO:0019843">
    <property type="term" value="F:rRNA binding"/>
    <property type="evidence" value="ECO:0007669"/>
    <property type="project" value="UniProtKB-UniRule"/>
</dbReference>
<dbReference type="GO" id="GO:0003735">
    <property type="term" value="F:structural constituent of ribosome"/>
    <property type="evidence" value="ECO:0007669"/>
    <property type="project" value="InterPro"/>
</dbReference>
<dbReference type="GO" id="GO:0016740">
    <property type="term" value="F:transferase activity"/>
    <property type="evidence" value="ECO:0007669"/>
    <property type="project" value="InterPro"/>
</dbReference>
<dbReference type="GO" id="GO:0002181">
    <property type="term" value="P:cytoplasmic translation"/>
    <property type="evidence" value="ECO:0007669"/>
    <property type="project" value="TreeGrafter"/>
</dbReference>
<dbReference type="FunFam" id="2.30.30.30:FF:000001">
    <property type="entry name" value="50S ribosomal protein L2"/>
    <property type="match status" value="1"/>
</dbReference>
<dbReference type="FunFam" id="2.40.50.140:FF:000003">
    <property type="entry name" value="50S ribosomal protein L2"/>
    <property type="match status" value="1"/>
</dbReference>
<dbReference type="FunFam" id="4.10.950.10:FF:000001">
    <property type="entry name" value="50S ribosomal protein L2"/>
    <property type="match status" value="1"/>
</dbReference>
<dbReference type="Gene3D" id="2.30.30.30">
    <property type="match status" value="1"/>
</dbReference>
<dbReference type="Gene3D" id="2.40.50.140">
    <property type="entry name" value="Nucleic acid-binding proteins"/>
    <property type="match status" value="1"/>
</dbReference>
<dbReference type="Gene3D" id="4.10.950.10">
    <property type="entry name" value="Ribosomal protein L2, domain 3"/>
    <property type="match status" value="1"/>
</dbReference>
<dbReference type="HAMAP" id="MF_01320_B">
    <property type="entry name" value="Ribosomal_uL2_B"/>
    <property type="match status" value="1"/>
</dbReference>
<dbReference type="InterPro" id="IPR012340">
    <property type="entry name" value="NA-bd_OB-fold"/>
</dbReference>
<dbReference type="InterPro" id="IPR014722">
    <property type="entry name" value="Rib_uL2_dom2"/>
</dbReference>
<dbReference type="InterPro" id="IPR002171">
    <property type="entry name" value="Ribosomal_uL2"/>
</dbReference>
<dbReference type="InterPro" id="IPR005880">
    <property type="entry name" value="Ribosomal_uL2_bac/org-type"/>
</dbReference>
<dbReference type="InterPro" id="IPR022669">
    <property type="entry name" value="Ribosomal_uL2_C"/>
</dbReference>
<dbReference type="InterPro" id="IPR014726">
    <property type="entry name" value="Ribosomal_uL2_dom3"/>
</dbReference>
<dbReference type="InterPro" id="IPR022666">
    <property type="entry name" value="Ribosomal_uL2_RNA-bd_dom"/>
</dbReference>
<dbReference type="InterPro" id="IPR008991">
    <property type="entry name" value="Translation_prot_SH3-like_sf"/>
</dbReference>
<dbReference type="NCBIfam" id="TIGR01171">
    <property type="entry name" value="rplB_bact"/>
    <property type="match status" value="1"/>
</dbReference>
<dbReference type="PANTHER" id="PTHR13691:SF5">
    <property type="entry name" value="LARGE RIBOSOMAL SUBUNIT PROTEIN UL2M"/>
    <property type="match status" value="1"/>
</dbReference>
<dbReference type="PANTHER" id="PTHR13691">
    <property type="entry name" value="RIBOSOMAL PROTEIN L2"/>
    <property type="match status" value="1"/>
</dbReference>
<dbReference type="Pfam" id="PF00181">
    <property type="entry name" value="Ribosomal_L2"/>
    <property type="match status" value="1"/>
</dbReference>
<dbReference type="Pfam" id="PF03947">
    <property type="entry name" value="Ribosomal_L2_C"/>
    <property type="match status" value="1"/>
</dbReference>
<dbReference type="PIRSF" id="PIRSF002158">
    <property type="entry name" value="Ribosomal_L2"/>
    <property type="match status" value="1"/>
</dbReference>
<dbReference type="SMART" id="SM01383">
    <property type="entry name" value="Ribosomal_L2"/>
    <property type="match status" value="1"/>
</dbReference>
<dbReference type="SMART" id="SM01382">
    <property type="entry name" value="Ribosomal_L2_C"/>
    <property type="match status" value="1"/>
</dbReference>
<dbReference type="SUPFAM" id="SSF50249">
    <property type="entry name" value="Nucleic acid-binding proteins"/>
    <property type="match status" value="1"/>
</dbReference>
<dbReference type="SUPFAM" id="SSF50104">
    <property type="entry name" value="Translation proteins SH3-like domain"/>
    <property type="match status" value="1"/>
</dbReference>
<comment type="function">
    <text evidence="1">One of the primary rRNA binding proteins. Required for association of the 30S and 50S subunits to form the 70S ribosome, for tRNA binding and peptide bond formation. It has been suggested to have peptidyltransferase activity; this is somewhat controversial. Makes several contacts with the 16S rRNA in the 70S ribosome.</text>
</comment>
<comment type="subunit">
    <text evidence="1">Part of the 50S ribosomal subunit. Forms a bridge to the 30S subunit in the 70S ribosome.</text>
</comment>
<comment type="similarity">
    <text evidence="1">Belongs to the universal ribosomal protein uL2 family.</text>
</comment>
<protein>
    <recommendedName>
        <fullName evidence="1">Large ribosomal subunit protein uL2</fullName>
    </recommendedName>
    <alternativeName>
        <fullName evidence="3">50S ribosomal protein L2</fullName>
    </alternativeName>
</protein>
<feature type="chain" id="PRO_1000141490" description="Large ribosomal subunit protein uL2">
    <location>
        <begin position="1"/>
        <end position="274"/>
    </location>
</feature>
<feature type="region of interest" description="Disordered" evidence="2">
    <location>
        <begin position="38"/>
        <end position="57"/>
    </location>
</feature>
<feature type="region of interest" description="Disordered" evidence="2">
    <location>
        <begin position="224"/>
        <end position="256"/>
    </location>
</feature>
<feature type="compositionally biased region" description="Basic and acidic residues" evidence="2">
    <location>
        <begin position="229"/>
        <end position="239"/>
    </location>
</feature>
<feature type="strand" evidence="4">
    <location>
        <begin position="8"/>
        <end position="10"/>
    </location>
</feature>
<feature type="turn" evidence="4">
    <location>
        <begin position="11"/>
        <end position="15"/>
    </location>
</feature>
<feature type="helix" evidence="4">
    <location>
        <begin position="31"/>
        <end position="33"/>
    </location>
</feature>
<feature type="strand" evidence="4">
    <location>
        <begin position="34"/>
        <end position="36"/>
    </location>
</feature>
<feature type="strand" evidence="4">
    <location>
        <begin position="51"/>
        <end position="54"/>
    </location>
</feature>
<feature type="strand" evidence="4">
    <location>
        <begin position="61"/>
        <end position="63"/>
    </location>
</feature>
<feature type="strand" evidence="4">
    <location>
        <begin position="76"/>
        <end position="82"/>
    </location>
</feature>
<feature type="strand" evidence="4">
    <location>
        <begin position="87"/>
        <end position="89"/>
    </location>
</feature>
<feature type="strand" evidence="4">
    <location>
        <begin position="91"/>
        <end position="96"/>
    </location>
</feature>
<feature type="strand" evidence="4">
    <location>
        <begin position="101"/>
        <end position="105"/>
    </location>
</feature>
<feature type="strand" evidence="4">
    <location>
        <begin position="118"/>
        <end position="121"/>
    </location>
</feature>
<feature type="strand" evidence="4">
    <location>
        <begin position="129"/>
        <end position="131"/>
    </location>
</feature>
<feature type="helix" evidence="4">
    <location>
        <begin position="132"/>
        <end position="134"/>
    </location>
</feature>
<feature type="strand" evidence="4">
    <location>
        <begin position="140"/>
        <end position="147"/>
    </location>
</feature>
<feature type="turn" evidence="4">
    <location>
        <begin position="148"/>
        <end position="150"/>
    </location>
</feature>
<feature type="strand" evidence="4">
    <location>
        <begin position="152"/>
        <end position="155"/>
    </location>
</feature>
<feature type="strand" evidence="4">
    <location>
        <begin position="162"/>
        <end position="168"/>
    </location>
</feature>
<feature type="strand" evidence="4">
    <location>
        <begin position="171"/>
        <end position="175"/>
    </location>
</feature>
<feature type="strand" evidence="4">
    <location>
        <begin position="181"/>
        <end position="185"/>
    </location>
</feature>
<feature type="strand" evidence="4">
    <location>
        <begin position="188"/>
        <end position="193"/>
    </location>
</feature>
<feature type="helix" evidence="4">
    <location>
        <begin position="200"/>
        <end position="202"/>
    </location>
</feature>
<feature type="helix" evidence="4">
    <location>
        <begin position="208"/>
        <end position="213"/>
    </location>
</feature>
<feature type="helix" evidence="4">
    <location>
        <begin position="222"/>
        <end position="224"/>
    </location>
</feature>
<feature type="turn" evidence="4">
    <location>
        <begin position="227"/>
        <end position="229"/>
    </location>
</feature>
<feature type="strand" evidence="4">
    <location>
        <begin position="236"/>
        <end position="238"/>
    </location>
</feature>
<feature type="helix" evidence="4">
    <location>
        <begin position="264"/>
        <end position="266"/>
    </location>
</feature>
<feature type="strand" evidence="4">
    <location>
        <begin position="267"/>
        <end position="269"/>
    </location>
</feature>